<comment type="function">
    <text evidence="2">High-affinity potassium transporter that could play a major role in the uptake of potassium from the rhizosphere. May act as a low-affinity potassium transporter under high potassium concentrations. Could also transport rubidium.</text>
</comment>
<comment type="subcellular location">
    <subcellularLocation>
        <location evidence="3">Cell membrane</location>
        <topology evidence="3">Multi-pass membrane protein</topology>
    </subcellularLocation>
</comment>
<comment type="alternative products">
    <event type="alternative splicing"/>
    <isoform>
        <id>O22397-1</id>
        <name>1</name>
        <sequence type="displayed"/>
    </isoform>
    <isoform>
        <id>O22397-2</id>
        <name>2</name>
        <sequence type="described" ref="VSP_008984"/>
    </isoform>
</comment>
<comment type="tissue specificity">
    <text evidence="2">Detected in the whole mature plant but preferentially expressed in roots and stems, and in potassium-starved plants.</text>
</comment>
<comment type="miscellaneous">
    <text>Low-affinity activity is strongly inhibited by barium or cesium.</text>
</comment>
<comment type="similarity">
    <text evidence="3">Belongs to the HAK/KUP transporter (TC 2.A.72.3) family.</text>
</comment>
<dbReference type="EMBL" id="AF012656">
    <property type="protein sequence ID" value="AAC49844.1"/>
    <property type="molecule type" value="Genomic_DNA"/>
</dbReference>
<dbReference type="EMBL" id="AF029876">
    <property type="protein sequence ID" value="AAB88901.1"/>
    <property type="molecule type" value="mRNA"/>
</dbReference>
<dbReference type="EMBL" id="AF033118">
    <property type="protein sequence ID" value="AAB87687.1"/>
    <property type="molecule type" value="mRNA"/>
</dbReference>
<dbReference type="EMBL" id="AC004165">
    <property type="protein sequence ID" value="AAC16965.1"/>
    <property type="molecule type" value="Genomic_DNA"/>
</dbReference>
<dbReference type="EMBL" id="AC004680">
    <property type="protein sequence ID" value="AAM14984.1"/>
    <property type="molecule type" value="Genomic_DNA"/>
</dbReference>
<dbReference type="EMBL" id="CP002685">
    <property type="protein sequence ID" value="AEC08341.1"/>
    <property type="molecule type" value="Genomic_DNA"/>
</dbReference>
<dbReference type="PIR" id="T00591">
    <property type="entry name" value="T02479"/>
</dbReference>
<dbReference type="RefSeq" id="NP_180568.1">
    <molecule id="O22397-1"/>
    <property type="nucleotide sequence ID" value="NM_128562.4"/>
</dbReference>
<dbReference type="BioGRID" id="2907">
    <property type="interactions" value="1"/>
</dbReference>
<dbReference type="FunCoup" id="O22397">
    <property type="interactions" value="14"/>
</dbReference>
<dbReference type="IntAct" id="O22397">
    <property type="interactions" value="1"/>
</dbReference>
<dbReference type="STRING" id="3702.O22397"/>
<dbReference type="TCDB" id="2.A.72.3.1">
    <property type="family name" value="the k(+) uptake permease (kup) family"/>
</dbReference>
<dbReference type="iPTMnet" id="O22397"/>
<dbReference type="PaxDb" id="3702-AT2G30070.1"/>
<dbReference type="ProteomicsDB" id="249398">
    <molecule id="O22397-1"/>
</dbReference>
<dbReference type="EnsemblPlants" id="AT2G30070.1">
    <molecule id="O22397-1"/>
    <property type="protein sequence ID" value="AT2G30070.1"/>
    <property type="gene ID" value="AT2G30070"/>
</dbReference>
<dbReference type="GeneID" id="817558"/>
<dbReference type="Gramene" id="AT2G30070.1">
    <molecule id="O22397-1"/>
    <property type="protein sequence ID" value="AT2G30070.1"/>
    <property type="gene ID" value="AT2G30070"/>
</dbReference>
<dbReference type="KEGG" id="ath:AT2G30070"/>
<dbReference type="Araport" id="AT2G30070"/>
<dbReference type="TAIR" id="AT2G30070">
    <property type="gene designation" value="KT1"/>
</dbReference>
<dbReference type="eggNOG" id="ENOG502QPSA">
    <property type="taxonomic scope" value="Eukaryota"/>
</dbReference>
<dbReference type="HOGENOM" id="CLU_008142_2_0_1"/>
<dbReference type="InParanoid" id="O22397"/>
<dbReference type="OMA" id="ETHPKSQ"/>
<dbReference type="OrthoDB" id="504708at2759"/>
<dbReference type="PhylomeDB" id="O22397"/>
<dbReference type="BioCyc" id="ARA:AT2G30070-MONOMER"/>
<dbReference type="BioCyc" id="MetaCyc:MONOMER-14583"/>
<dbReference type="PRO" id="PR:O22397"/>
<dbReference type="Proteomes" id="UP000006548">
    <property type="component" value="Chromosome 2"/>
</dbReference>
<dbReference type="ExpressionAtlas" id="O22397">
    <property type="expression patterns" value="baseline and differential"/>
</dbReference>
<dbReference type="GO" id="GO:0005886">
    <property type="term" value="C:plasma membrane"/>
    <property type="evidence" value="ECO:0007669"/>
    <property type="project" value="UniProtKB-SubCell"/>
</dbReference>
<dbReference type="GO" id="GO:0015079">
    <property type="term" value="F:potassium ion transmembrane transporter activity"/>
    <property type="evidence" value="ECO:0000250"/>
    <property type="project" value="TAIR"/>
</dbReference>
<dbReference type="InterPro" id="IPR003855">
    <property type="entry name" value="K+_transporter"/>
</dbReference>
<dbReference type="InterPro" id="IPR053952">
    <property type="entry name" value="K_trans_C"/>
</dbReference>
<dbReference type="InterPro" id="IPR053951">
    <property type="entry name" value="K_trans_N"/>
</dbReference>
<dbReference type="NCBIfam" id="TIGR00794">
    <property type="entry name" value="kup"/>
    <property type="match status" value="1"/>
</dbReference>
<dbReference type="PANTHER" id="PTHR30540">
    <property type="entry name" value="OSMOTIC STRESS POTASSIUM TRANSPORTER"/>
    <property type="match status" value="1"/>
</dbReference>
<dbReference type="PANTHER" id="PTHR30540:SF14">
    <property type="entry name" value="POTASSIUM TRANSPORTER 1"/>
    <property type="match status" value="1"/>
</dbReference>
<dbReference type="Pfam" id="PF02705">
    <property type="entry name" value="K_trans"/>
    <property type="match status" value="1"/>
</dbReference>
<dbReference type="Pfam" id="PF22776">
    <property type="entry name" value="K_trans_C"/>
    <property type="match status" value="1"/>
</dbReference>
<evidence type="ECO:0000255" key="1"/>
<evidence type="ECO:0000269" key="2">
    <source>
    </source>
</evidence>
<evidence type="ECO:0000305" key="3"/>
<sequence>MNQSPSLIEQGISQQHLKTLSCANVLTLAYQSLGVIYGDLSTSPLYVYKTTFSGKLSLHEDDEEIFGVFSFIFWTFTLIALFKYVFIVLSADDNGEGGTFALYSLLCRYAKLSILPNHQEMDEKLSTYATGSPGETRQSAAVKSFFEKHPKSQKCLLLFVLLGTCMAIGDSVLTPTISVLSAVSGVKLKIPNLHENYVVIIACIILVAIFSVQRYGTHRVAFIFAPISTAWLLSISSIGVYNTIKWNPRIVSALSPVYMYKFLRSTGVEGWVSLGGVVLSITGVETMFADLGHFSSLSIKVAFSFFVYPCLILAYMGEAAFLSKHHEDIQQSFYKAIPEPVFWPVFIVATFAAVVGSQAVISATFSIISQCCALDCFPRVKIIHTSSKIHGQIYIPEVNWMLMCLCLAVTIGLRDTNMMGHAYGLAVTSVMLVTTCLMTLVMTIVWKQRIITVLAFVVFFGSIELLYFSSCVYKVPEGGWIPILLSLTFMAVMYIWNYGTTKKHEFDVENKVSMDRIVSLGPSIGMVRVPGIGLVYSNLVTGVPAVFGHFVTNLPAFHKILVFVCVKSVQVPYVGEEERFVISRVGPKEYGMFRSVVRYGYRDVPREMYDFESRLVSAIVEFVETEPGLEEEEMSSVRRKKEECMEIMEAKEAGVAYILGHSYAKAKQSSSVLKKLAVNVVFAFMSTNCRGTDVVLNVPHTSLLEVGMVYYV</sequence>
<reference key="1">
    <citation type="journal article" date="1997" name="FEBS Lett.">
        <title>A new family of K+ transporters from Arabidopsis that are conserved across phyla.</title>
        <authorList>
            <person name="Quintero F.J."/>
            <person name="Blatt M.R."/>
        </authorList>
    </citation>
    <scope>NUCLEOTIDE SEQUENCE [GENOMIC DNA] (ISOFORMS 1 AND 2)</scope>
    <scope>CHARACTERIZATION</scope>
    <source>
        <strain>cv. Columbia</strain>
    </source>
</reference>
<reference key="2">
    <citation type="journal article" date="1998" name="Plant Cell">
        <title>AtKUP1: an Arabidopsis gene encoding high-affinity potassium transport activity.</title>
        <authorList>
            <person name="Kim E.J."/>
            <person name="Kwak J.M."/>
            <person name="Uozumi N."/>
            <person name="Schroeder J.I."/>
        </authorList>
    </citation>
    <scope>NUCLEOTIDE SEQUENCE [MRNA] (ISOFORM 1)</scope>
    <scope>FUNCTION</scope>
    <scope>TISSUE SPECIFICITY</scope>
    <source>
        <strain>cv. Columbia</strain>
    </source>
</reference>
<reference key="3">
    <citation type="journal article" date="1998" name="Plant Cell">
        <title>AtKUP1: a dual-affinity K+ transporter from Arabidopsis.</title>
        <authorList>
            <person name="Fu H.-H."/>
            <person name="Luan S."/>
        </authorList>
    </citation>
    <scope>NUCLEOTIDE SEQUENCE [MRNA] (ISOFORM 1)</scope>
    <scope>CHARACTERIZATION</scope>
    <source>
        <strain>cv. Columbia</strain>
    </source>
</reference>
<reference key="4">
    <citation type="journal article" date="1999" name="Nature">
        <title>Sequence and analysis of chromosome 2 of the plant Arabidopsis thaliana.</title>
        <authorList>
            <person name="Lin X."/>
            <person name="Kaul S."/>
            <person name="Rounsley S.D."/>
            <person name="Shea T.P."/>
            <person name="Benito M.-I."/>
            <person name="Town C.D."/>
            <person name="Fujii C.Y."/>
            <person name="Mason T.M."/>
            <person name="Bowman C.L."/>
            <person name="Barnstead M.E."/>
            <person name="Feldblyum T.V."/>
            <person name="Buell C.R."/>
            <person name="Ketchum K.A."/>
            <person name="Lee J.J."/>
            <person name="Ronning C.M."/>
            <person name="Koo H.L."/>
            <person name="Moffat K.S."/>
            <person name="Cronin L.A."/>
            <person name="Shen M."/>
            <person name="Pai G."/>
            <person name="Van Aken S."/>
            <person name="Umayam L."/>
            <person name="Tallon L.J."/>
            <person name="Gill J.E."/>
            <person name="Adams M.D."/>
            <person name="Carrera A.J."/>
            <person name="Creasy T.H."/>
            <person name="Goodman H.M."/>
            <person name="Somerville C.R."/>
            <person name="Copenhaver G.P."/>
            <person name="Preuss D."/>
            <person name="Nierman W.C."/>
            <person name="White O."/>
            <person name="Eisen J.A."/>
            <person name="Salzberg S.L."/>
            <person name="Fraser C.M."/>
            <person name="Venter J.C."/>
        </authorList>
    </citation>
    <scope>NUCLEOTIDE SEQUENCE [LARGE SCALE GENOMIC DNA]</scope>
    <source>
        <strain>cv. Columbia</strain>
    </source>
</reference>
<reference key="5">
    <citation type="journal article" date="2017" name="Plant J.">
        <title>Araport11: a complete reannotation of the Arabidopsis thaliana reference genome.</title>
        <authorList>
            <person name="Cheng C.Y."/>
            <person name="Krishnakumar V."/>
            <person name="Chan A.P."/>
            <person name="Thibaud-Nissen F."/>
            <person name="Schobel S."/>
            <person name="Town C.D."/>
        </authorList>
    </citation>
    <scope>GENOME REANNOTATION</scope>
    <source>
        <strain>cv. Columbia</strain>
    </source>
</reference>
<reference key="6">
    <citation type="journal article" date="2001" name="Plant Physiol.">
        <title>Phylogenetic relationships within cation transporter families of Arabidopsis.</title>
        <authorList>
            <person name="Maeser P."/>
            <person name="Thomine S."/>
            <person name="Schroeder J.I."/>
            <person name="Ward J.M."/>
            <person name="Hirschi K."/>
            <person name="Sze H."/>
            <person name="Talke I.N."/>
            <person name="Amtmann A."/>
            <person name="Maathuis F.J.M."/>
            <person name="Sanders D."/>
            <person name="Harper J.F."/>
            <person name="Tchieu J."/>
            <person name="Gribskov M."/>
            <person name="Persans M.W."/>
            <person name="Salt D.E."/>
            <person name="Kim S.A."/>
            <person name="Guerinot M.L."/>
        </authorList>
    </citation>
    <scope>GENE FAMILY</scope>
    <scope>NOMENCLATURE</scope>
</reference>
<proteinExistence type="evidence at protein level"/>
<gene>
    <name type="primary">POT1</name>
    <name type="synonym">KT1</name>
    <name type="synonym">KUP1</name>
    <name type="ordered locus">At2g30070</name>
    <name type="ORF">F23F1.18</name>
    <name type="ORF">T27E13.19</name>
</gene>
<protein>
    <recommendedName>
        <fullName>Potassium transporter 1</fullName>
        <shortName>AtKT1</shortName>
        <shortName>AtKUP1</shortName>
        <shortName>AtPOT1</shortName>
    </recommendedName>
</protein>
<organism>
    <name type="scientific">Arabidopsis thaliana</name>
    <name type="common">Mouse-ear cress</name>
    <dbReference type="NCBI Taxonomy" id="3702"/>
    <lineage>
        <taxon>Eukaryota</taxon>
        <taxon>Viridiplantae</taxon>
        <taxon>Streptophyta</taxon>
        <taxon>Embryophyta</taxon>
        <taxon>Tracheophyta</taxon>
        <taxon>Spermatophyta</taxon>
        <taxon>Magnoliopsida</taxon>
        <taxon>eudicotyledons</taxon>
        <taxon>Gunneridae</taxon>
        <taxon>Pentapetalae</taxon>
        <taxon>rosids</taxon>
        <taxon>malvids</taxon>
        <taxon>Brassicales</taxon>
        <taxon>Brassicaceae</taxon>
        <taxon>Camelineae</taxon>
        <taxon>Arabidopsis</taxon>
    </lineage>
</organism>
<accession>O22397</accession>
<accession>O50043</accession>
<keyword id="KW-0025">Alternative splicing</keyword>
<keyword id="KW-1003">Cell membrane</keyword>
<keyword id="KW-0406">Ion transport</keyword>
<keyword id="KW-0472">Membrane</keyword>
<keyword id="KW-0630">Potassium</keyword>
<keyword id="KW-0633">Potassium transport</keyword>
<keyword id="KW-1185">Reference proteome</keyword>
<keyword id="KW-0812">Transmembrane</keyword>
<keyword id="KW-1133">Transmembrane helix</keyword>
<keyword id="KW-0813">Transport</keyword>
<feature type="chain" id="PRO_0000209077" description="Potassium transporter 1">
    <location>
        <begin position="1"/>
        <end position="712"/>
    </location>
</feature>
<feature type="topological domain" description="Cytoplasmic" evidence="1">
    <location>
        <begin position="1"/>
        <end position="19"/>
    </location>
</feature>
<feature type="transmembrane region" description="Helical" evidence="1">
    <location>
        <begin position="20"/>
        <end position="40"/>
    </location>
</feature>
<feature type="topological domain" description="Extracellular" evidence="1">
    <location>
        <begin position="41"/>
        <end position="67"/>
    </location>
</feature>
<feature type="transmembrane region" description="Helical" evidence="1">
    <location>
        <begin position="68"/>
        <end position="88"/>
    </location>
</feature>
<feature type="topological domain" description="Cytoplasmic" evidence="1">
    <location>
        <begin position="89"/>
        <end position="154"/>
    </location>
</feature>
<feature type="transmembrane region" description="Helical" evidence="1">
    <location>
        <begin position="155"/>
        <end position="175"/>
    </location>
</feature>
<feature type="topological domain" description="Extracellular" evidence="1">
    <location>
        <begin position="176"/>
        <end position="189"/>
    </location>
</feature>
<feature type="transmembrane region" description="Helical" evidence="1">
    <location>
        <begin position="190"/>
        <end position="210"/>
    </location>
</feature>
<feature type="topological domain" description="Cytoplasmic" evidence="1">
    <location>
        <begin position="211"/>
        <end position="219"/>
    </location>
</feature>
<feature type="transmembrane region" description="Helical" evidence="1">
    <location>
        <begin position="220"/>
        <end position="240"/>
    </location>
</feature>
<feature type="topological domain" description="Extracellular" evidence="1">
    <location>
        <begin position="241"/>
        <end position="267"/>
    </location>
</feature>
<feature type="transmembrane region" description="Helical" evidence="1">
    <location>
        <begin position="268"/>
        <end position="288"/>
    </location>
</feature>
<feature type="topological domain" description="Cytoplasmic" evidence="1">
    <location>
        <begin position="289"/>
        <end position="300"/>
    </location>
</feature>
<feature type="transmembrane region" description="Helical" evidence="1">
    <location>
        <begin position="301"/>
        <end position="321"/>
    </location>
</feature>
<feature type="topological domain" description="Extracellular" evidence="1">
    <location>
        <begin position="322"/>
        <end position="340"/>
    </location>
</feature>
<feature type="transmembrane region" description="Helical" evidence="1">
    <location>
        <begin position="341"/>
        <end position="361"/>
    </location>
</feature>
<feature type="topological domain" description="Cytoplasmic" evidence="1">
    <location>
        <begin position="362"/>
        <end position="392"/>
    </location>
</feature>
<feature type="transmembrane region" description="Helical" evidence="1">
    <location>
        <begin position="393"/>
        <end position="413"/>
    </location>
</feature>
<feature type="topological domain" description="Extracellular" evidence="1">
    <location>
        <begin position="414"/>
        <end position="424"/>
    </location>
</feature>
<feature type="transmembrane region" description="Helical" evidence="1">
    <location>
        <begin position="425"/>
        <end position="445"/>
    </location>
</feature>
<feature type="topological domain" description="Cytoplasmic" evidence="1">
    <location>
        <begin position="446"/>
        <end position="449"/>
    </location>
</feature>
<feature type="transmembrane region" description="Helical" evidence="1">
    <location>
        <begin position="450"/>
        <end position="470"/>
    </location>
</feature>
<feature type="topological domain" description="Extracellular" evidence="1">
    <location>
        <begin position="471"/>
        <end position="474"/>
    </location>
</feature>
<feature type="transmembrane region" description="Helical" evidence="1">
    <location>
        <begin position="475"/>
        <end position="495"/>
    </location>
</feature>
<feature type="topological domain" description="Cytoplasmic" evidence="1">
    <location>
        <begin position="496"/>
        <end position="712"/>
    </location>
</feature>
<feature type="splice variant" id="VSP_008984" description="In isoform 2." evidence="3">
    <location>
        <begin position="16"/>
        <end position="31"/>
    </location>
</feature>
<feature type="sequence conflict" description="In Ref. 1; AAC49844." evidence="3" ref="1">
    <original>F</original>
    <variation>L</variation>
    <location>
        <position position="100"/>
    </location>
</feature>
<feature type="sequence conflict" description="In Ref. 1; AAC49844." evidence="3" ref="1">
    <original>L</original>
    <variation>P</variation>
    <location>
        <position position="180"/>
    </location>
</feature>
<feature type="sequence conflict" description="In Ref. 1; AAC49844." evidence="3" ref="1">
    <original>A</original>
    <variation>V</variation>
    <location>
        <position position="319"/>
    </location>
</feature>
<feature type="sequence conflict" description="In Ref. 1; AAC49844." evidence="3" ref="1">
    <original>E</original>
    <variation>G</variation>
    <location>
        <position position="624"/>
    </location>
</feature>
<name>POT1_ARATH</name>